<keyword id="KW-0320">Glycogen biosynthesis</keyword>
<keyword id="KW-0328">Glycosyltransferase</keyword>
<keyword id="KW-0808">Transferase</keyword>
<reference key="1">
    <citation type="journal article" date="2006" name="DNA Res.">
        <title>Genome sequence of the cat pathogen, Chlamydophila felis.</title>
        <authorList>
            <person name="Azuma Y."/>
            <person name="Hirakawa H."/>
            <person name="Yamashita A."/>
            <person name="Cai Y."/>
            <person name="Rahman M.A."/>
            <person name="Suzuki H."/>
            <person name="Mitaku S."/>
            <person name="Toh H."/>
            <person name="Goto S."/>
            <person name="Murakami T."/>
            <person name="Sugi K."/>
            <person name="Hayashi H."/>
            <person name="Fukushi H."/>
            <person name="Hattori M."/>
            <person name="Kuhara S."/>
            <person name="Shirai M."/>
        </authorList>
    </citation>
    <scope>NUCLEOTIDE SEQUENCE [LARGE SCALE GENOMIC DNA]</scope>
    <source>
        <strain>Fe/C-56</strain>
    </source>
</reference>
<gene>
    <name evidence="1" type="primary">glgA</name>
    <name type="ordered locus">CF0193</name>
</gene>
<feature type="chain" id="PRO_0000241791" description="Glycogen synthase">
    <location>
        <begin position="1"/>
        <end position="475"/>
    </location>
</feature>
<feature type="binding site" evidence="1">
    <location>
        <position position="15"/>
    </location>
    <ligand>
        <name>ADP-alpha-D-glucose</name>
        <dbReference type="ChEBI" id="CHEBI:57498"/>
    </ligand>
</feature>
<protein>
    <recommendedName>
        <fullName evidence="1">Glycogen synthase</fullName>
        <ecNumber evidence="1">2.4.1.21</ecNumber>
    </recommendedName>
    <alternativeName>
        <fullName evidence="1">Starch [bacterial glycogen] synthase</fullName>
    </alternativeName>
</protein>
<organism>
    <name type="scientific">Chlamydia felis (strain Fe/C-56)</name>
    <name type="common">Chlamydophila felis</name>
    <dbReference type="NCBI Taxonomy" id="264202"/>
    <lineage>
        <taxon>Bacteria</taxon>
        <taxon>Pseudomonadati</taxon>
        <taxon>Chlamydiota</taxon>
        <taxon>Chlamydiia</taxon>
        <taxon>Chlamydiales</taxon>
        <taxon>Chlamydiaceae</taxon>
        <taxon>Chlamydia/Chlamydophila group</taxon>
        <taxon>Chlamydia</taxon>
    </lineage>
</organism>
<dbReference type="EC" id="2.4.1.21" evidence="1"/>
<dbReference type="EMBL" id="AP006861">
    <property type="protein sequence ID" value="BAE80965.1"/>
    <property type="molecule type" value="Genomic_DNA"/>
</dbReference>
<dbReference type="RefSeq" id="WP_011457748.1">
    <property type="nucleotide sequence ID" value="NC_007899.1"/>
</dbReference>
<dbReference type="SMR" id="Q255S3"/>
<dbReference type="STRING" id="264202.CF0193"/>
<dbReference type="CAZy" id="GT5">
    <property type="family name" value="Glycosyltransferase Family 5"/>
</dbReference>
<dbReference type="KEGG" id="cfe:CF0193"/>
<dbReference type="eggNOG" id="COG0297">
    <property type="taxonomic scope" value="Bacteria"/>
</dbReference>
<dbReference type="HOGENOM" id="CLU_009583_18_5_0"/>
<dbReference type="OrthoDB" id="9808590at2"/>
<dbReference type="UniPathway" id="UPA00164"/>
<dbReference type="Proteomes" id="UP000001260">
    <property type="component" value="Chromosome"/>
</dbReference>
<dbReference type="GO" id="GO:0009011">
    <property type="term" value="F:alpha-1,4-glucan glucosyltransferase (ADP-glucose donor) activity"/>
    <property type="evidence" value="ECO:0007669"/>
    <property type="project" value="UniProtKB-UniRule"/>
</dbReference>
<dbReference type="GO" id="GO:0004373">
    <property type="term" value="F:alpha-1,4-glucan glucosyltransferase (UDP-glucose donor) activity"/>
    <property type="evidence" value="ECO:0007669"/>
    <property type="project" value="InterPro"/>
</dbReference>
<dbReference type="GO" id="GO:0005978">
    <property type="term" value="P:glycogen biosynthetic process"/>
    <property type="evidence" value="ECO:0007669"/>
    <property type="project" value="UniProtKB-UniRule"/>
</dbReference>
<dbReference type="CDD" id="cd03791">
    <property type="entry name" value="GT5_Glycogen_synthase_DULL1-like"/>
    <property type="match status" value="1"/>
</dbReference>
<dbReference type="Gene3D" id="3.40.50.2000">
    <property type="entry name" value="Glycogen Phosphorylase B"/>
    <property type="match status" value="2"/>
</dbReference>
<dbReference type="HAMAP" id="MF_00484">
    <property type="entry name" value="Glycogen_synth"/>
    <property type="match status" value="1"/>
</dbReference>
<dbReference type="InterPro" id="IPR001296">
    <property type="entry name" value="Glyco_trans_1"/>
</dbReference>
<dbReference type="InterPro" id="IPR011835">
    <property type="entry name" value="GS/SS"/>
</dbReference>
<dbReference type="InterPro" id="IPR013534">
    <property type="entry name" value="Starch_synth_cat_dom"/>
</dbReference>
<dbReference type="NCBIfam" id="TIGR02095">
    <property type="entry name" value="glgA"/>
    <property type="match status" value="1"/>
</dbReference>
<dbReference type="NCBIfam" id="NF001904">
    <property type="entry name" value="PRK00654.2-3"/>
    <property type="match status" value="1"/>
</dbReference>
<dbReference type="PANTHER" id="PTHR46083">
    <property type="match status" value="1"/>
</dbReference>
<dbReference type="PANTHER" id="PTHR46083:SF1">
    <property type="entry name" value="GLYCOGEN SYNTHASE 2-RELATED"/>
    <property type="match status" value="1"/>
</dbReference>
<dbReference type="Pfam" id="PF08323">
    <property type="entry name" value="Glyco_transf_5"/>
    <property type="match status" value="1"/>
</dbReference>
<dbReference type="Pfam" id="PF00534">
    <property type="entry name" value="Glycos_transf_1"/>
    <property type="match status" value="1"/>
</dbReference>
<dbReference type="SUPFAM" id="SSF53756">
    <property type="entry name" value="UDP-Glycosyltransferase/glycogen phosphorylase"/>
    <property type="match status" value="1"/>
</dbReference>
<comment type="function">
    <text evidence="1">Synthesizes alpha-1,4-glucan chains using ADP-glucose.</text>
</comment>
<comment type="catalytic activity">
    <reaction evidence="1">
        <text>[(1-&gt;4)-alpha-D-glucosyl](n) + ADP-alpha-D-glucose = [(1-&gt;4)-alpha-D-glucosyl](n+1) + ADP + H(+)</text>
        <dbReference type="Rhea" id="RHEA:18189"/>
        <dbReference type="Rhea" id="RHEA-COMP:9584"/>
        <dbReference type="Rhea" id="RHEA-COMP:9587"/>
        <dbReference type="ChEBI" id="CHEBI:15378"/>
        <dbReference type="ChEBI" id="CHEBI:15444"/>
        <dbReference type="ChEBI" id="CHEBI:57498"/>
        <dbReference type="ChEBI" id="CHEBI:456216"/>
        <dbReference type="EC" id="2.4.1.21"/>
    </reaction>
</comment>
<comment type="pathway">
    <text evidence="1">Glycan biosynthesis; glycogen biosynthesis.</text>
</comment>
<comment type="similarity">
    <text evidence="1">Belongs to the glycosyltransferase 1 family. Bacterial/plant glycogen synthase subfamily.</text>
</comment>
<accession>Q255S3</accession>
<sequence>MKIIQAAVEFAPFIKAGGLGDAVYSLSKALSASHDVEVLLPFYPCIFPTVSSQVIDEKVFAYEFLGRQHASSISYSYEGMILTVITLDSQLELFSTSTIYTQDDTLRFSAFSAAAAAYIQKLNHVDIVHMHDWHTGLLPGLLKEPNRQHYPKRIFTIHNFSYRGYCSTQLLGASGISEFGLSNYQLFRDPQVSVLLKGALYCSDYITTVSPTYAQDILHDYSDYEMHDAIMARRHVFRGILNGIDDNIWNPETDSSLVANYGKNLLDSPEILFTKKEENKVALYEKLGMSPEHSPLLCIISRIVEQKGPEFMKAAILHAMENGYAFILVGKCYDEETQRKFSNLQESLTMSPNVRIILDYNEPLARLLYGAADMLCIPSHFEPCGLTQLIGMRYGTVPLARATGGLADTVTPGINGFTFSHADNFNDFFRMLSQAVTTYRHEPDVWFQLVEEGMLRSSGLSTMAMHYLEIYNSLL</sequence>
<evidence type="ECO:0000255" key="1">
    <source>
        <dbReference type="HAMAP-Rule" id="MF_00484"/>
    </source>
</evidence>
<name>GLGA_CHLFF</name>
<proteinExistence type="inferred from homology"/>